<proteinExistence type="evidence at protein level"/>
<organism>
    <name type="scientific">Bacillus subtilis (strain 168)</name>
    <dbReference type="NCBI Taxonomy" id="224308"/>
    <lineage>
        <taxon>Bacteria</taxon>
        <taxon>Bacillati</taxon>
        <taxon>Bacillota</taxon>
        <taxon>Bacilli</taxon>
        <taxon>Bacillales</taxon>
        <taxon>Bacillaceae</taxon>
        <taxon>Bacillus</taxon>
    </lineage>
</organism>
<dbReference type="EC" id="5.4.4.2"/>
<dbReference type="EMBL" id="U26444">
    <property type="protein sequence ID" value="AAC44631.1"/>
    <property type="molecule type" value="Genomic_DNA"/>
</dbReference>
<dbReference type="EMBL" id="AL009126">
    <property type="protein sequence ID" value="CAB15189.2"/>
    <property type="molecule type" value="Genomic_DNA"/>
</dbReference>
<dbReference type="PIR" id="C69615">
    <property type="entry name" value="C69615"/>
</dbReference>
<dbReference type="RefSeq" id="NP_391079.2">
    <property type="nucleotide sequence ID" value="NC_000964.3"/>
</dbReference>
<dbReference type="RefSeq" id="WP_003243699.1">
    <property type="nucleotide sequence ID" value="NZ_OZ025638.1"/>
</dbReference>
<dbReference type="SMR" id="P45744"/>
<dbReference type="FunCoup" id="P45744">
    <property type="interactions" value="70"/>
</dbReference>
<dbReference type="IntAct" id="P45744">
    <property type="interactions" value="1"/>
</dbReference>
<dbReference type="MINT" id="P45744"/>
<dbReference type="STRING" id="224308.BSU31990"/>
<dbReference type="iPTMnet" id="P45744"/>
<dbReference type="PaxDb" id="224308-BSU31990"/>
<dbReference type="EnsemblBacteria" id="CAB15189">
    <property type="protein sequence ID" value="CAB15189"/>
    <property type="gene ID" value="BSU_31990"/>
</dbReference>
<dbReference type="GeneID" id="937162"/>
<dbReference type="KEGG" id="bsu:BSU31990"/>
<dbReference type="PATRIC" id="fig|224308.179.peg.3465"/>
<dbReference type="eggNOG" id="COG1169">
    <property type="taxonomic scope" value="Bacteria"/>
</dbReference>
<dbReference type="InParanoid" id="P45744"/>
<dbReference type="OrthoDB" id="9803598at2"/>
<dbReference type="PhylomeDB" id="P45744"/>
<dbReference type="BioCyc" id="BSUB:BSU31990-MONOMER"/>
<dbReference type="BioCyc" id="MetaCyc:MONOMER-13807"/>
<dbReference type="UniPathway" id="UPA00013"/>
<dbReference type="Proteomes" id="UP000001570">
    <property type="component" value="Chromosome"/>
</dbReference>
<dbReference type="GO" id="GO:0008909">
    <property type="term" value="F:isochorismate synthase activity"/>
    <property type="evidence" value="ECO:0007669"/>
    <property type="project" value="UniProtKB-EC"/>
</dbReference>
<dbReference type="GO" id="GO:0009058">
    <property type="term" value="P:biosynthetic process"/>
    <property type="evidence" value="ECO:0007669"/>
    <property type="project" value="InterPro"/>
</dbReference>
<dbReference type="Gene3D" id="3.60.120.10">
    <property type="entry name" value="Anthranilate synthase"/>
    <property type="match status" value="1"/>
</dbReference>
<dbReference type="InterPro" id="IPR005801">
    <property type="entry name" value="ADC_synthase"/>
</dbReference>
<dbReference type="InterPro" id="IPR015890">
    <property type="entry name" value="Chorismate_C"/>
</dbReference>
<dbReference type="InterPro" id="IPR004561">
    <property type="entry name" value="IsoChor_synthase"/>
</dbReference>
<dbReference type="NCBIfam" id="TIGR00543">
    <property type="entry name" value="isochor_syn"/>
    <property type="match status" value="1"/>
</dbReference>
<dbReference type="NCBIfam" id="NF005380">
    <property type="entry name" value="PRK06923.1"/>
    <property type="match status" value="1"/>
</dbReference>
<dbReference type="PANTHER" id="PTHR42839">
    <property type="entry name" value="ISOCHORISMATE SYNTHASE ENTC"/>
    <property type="match status" value="1"/>
</dbReference>
<dbReference type="PANTHER" id="PTHR42839:SF2">
    <property type="entry name" value="ISOCHORISMATE SYNTHASE ENTC"/>
    <property type="match status" value="1"/>
</dbReference>
<dbReference type="Pfam" id="PF00425">
    <property type="entry name" value="Chorismate_bind"/>
    <property type="match status" value="1"/>
</dbReference>
<dbReference type="SUPFAM" id="SSF56322">
    <property type="entry name" value="ADC synthase"/>
    <property type="match status" value="1"/>
</dbReference>
<reference key="1">
    <citation type="journal article" date="1996" name="J. Bacteriol.">
        <title>Duplicate isochorismate synthase genes of Bacillus subtilis: regulation and involvement in the biosyntheses of menaquinone and 2,3-dihydroxybenzoate.</title>
        <authorList>
            <person name="Rowland B.M."/>
            <person name="Taber H.W."/>
        </authorList>
    </citation>
    <scope>NUCLEOTIDE SEQUENCE [GENOMIC DNA]</scope>
    <source>
        <strain>168 / Marburg / ATCC 6051 / DSM 10 / JCM 1465 / NBRC 13719 / NCIMB 3610 / NRRL NRS-744 / VKM B-501</strain>
    </source>
</reference>
<reference key="2">
    <citation type="journal article" date="1997" name="Nature">
        <title>The complete genome sequence of the Gram-positive bacterium Bacillus subtilis.</title>
        <authorList>
            <person name="Kunst F."/>
            <person name="Ogasawara N."/>
            <person name="Moszer I."/>
            <person name="Albertini A.M."/>
            <person name="Alloni G."/>
            <person name="Azevedo V."/>
            <person name="Bertero M.G."/>
            <person name="Bessieres P."/>
            <person name="Bolotin A."/>
            <person name="Borchert S."/>
            <person name="Borriss R."/>
            <person name="Boursier L."/>
            <person name="Brans A."/>
            <person name="Braun M."/>
            <person name="Brignell S.C."/>
            <person name="Bron S."/>
            <person name="Brouillet S."/>
            <person name="Bruschi C.V."/>
            <person name="Caldwell B."/>
            <person name="Capuano V."/>
            <person name="Carter N.M."/>
            <person name="Choi S.-K."/>
            <person name="Codani J.-J."/>
            <person name="Connerton I.F."/>
            <person name="Cummings N.J."/>
            <person name="Daniel R.A."/>
            <person name="Denizot F."/>
            <person name="Devine K.M."/>
            <person name="Duesterhoeft A."/>
            <person name="Ehrlich S.D."/>
            <person name="Emmerson P.T."/>
            <person name="Entian K.-D."/>
            <person name="Errington J."/>
            <person name="Fabret C."/>
            <person name="Ferrari E."/>
            <person name="Foulger D."/>
            <person name="Fritz C."/>
            <person name="Fujita M."/>
            <person name="Fujita Y."/>
            <person name="Fuma S."/>
            <person name="Galizzi A."/>
            <person name="Galleron N."/>
            <person name="Ghim S.-Y."/>
            <person name="Glaser P."/>
            <person name="Goffeau A."/>
            <person name="Golightly E.J."/>
            <person name="Grandi G."/>
            <person name="Guiseppi G."/>
            <person name="Guy B.J."/>
            <person name="Haga K."/>
            <person name="Haiech J."/>
            <person name="Harwood C.R."/>
            <person name="Henaut A."/>
            <person name="Hilbert H."/>
            <person name="Holsappel S."/>
            <person name="Hosono S."/>
            <person name="Hullo M.-F."/>
            <person name="Itaya M."/>
            <person name="Jones L.-M."/>
            <person name="Joris B."/>
            <person name="Karamata D."/>
            <person name="Kasahara Y."/>
            <person name="Klaerr-Blanchard M."/>
            <person name="Klein C."/>
            <person name="Kobayashi Y."/>
            <person name="Koetter P."/>
            <person name="Koningstein G."/>
            <person name="Krogh S."/>
            <person name="Kumano M."/>
            <person name="Kurita K."/>
            <person name="Lapidus A."/>
            <person name="Lardinois S."/>
            <person name="Lauber J."/>
            <person name="Lazarevic V."/>
            <person name="Lee S.-M."/>
            <person name="Levine A."/>
            <person name="Liu H."/>
            <person name="Masuda S."/>
            <person name="Mauel C."/>
            <person name="Medigue C."/>
            <person name="Medina N."/>
            <person name="Mellado R.P."/>
            <person name="Mizuno M."/>
            <person name="Moestl D."/>
            <person name="Nakai S."/>
            <person name="Noback M."/>
            <person name="Noone D."/>
            <person name="O'Reilly M."/>
            <person name="Ogawa K."/>
            <person name="Ogiwara A."/>
            <person name="Oudega B."/>
            <person name="Park S.-H."/>
            <person name="Parro V."/>
            <person name="Pohl T.M."/>
            <person name="Portetelle D."/>
            <person name="Porwollik S."/>
            <person name="Prescott A.M."/>
            <person name="Presecan E."/>
            <person name="Pujic P."/>
            <person name="Purnelle B."/>
            <person name="Rapoport G."/>
            <person name="Rey M."/>
            <person name="Reynolds S."/>
            <person name="Rieger M."/>
            <person name="Rivolta C."/>
            <person name="Rocha E."/>
            <person name="Roche B."/>
            <person name="Rose M."/>
            <person name="Sadaie Y."/>
            <person name="Sato T."/>
            <person name="Scanlan E."/>
            <person name="Schleich S."/>
            <person name="Schroeter R."/>
            <person name="Scoffone F."/>
            <person name="Sekiguchi J."/>
            <person name="Sekowska A."/>
            <person name="Seror S.J."/>
            <person name="Serror P."/>
            <person name="Shin B.-S."/>
            <person name="Soldo B."/>
            <person name="Sorokin A."/>
            <person name="Tacconi E."/>
            <person name="Takagi T."/>
            <person name="Takahashi H."/>
            <person name="Takemaru K."/>
            <person name="Takeuchi M."/>
            <person name="Tamakoshi A."/>
            <person name="Tanaka T."/>
            <person name="Terpstra P."/>
            <person name="Tognoni A."/>
            <person name="Tosato V."/>
            <person name="Uchiyama S."/>
            <person name="Vandenbol M."/>
            <person name="Vannier F."/>
            <person name="Vassarotti A."/>
            <person name="Viari A."/>
            <person name="Wambutt R."/>
            <person name="Wedler E."/>
            <person name="Wedler H."/>
            <person name="Weitzenegger T."/>
            <person name="Winters P."/>
            <person name="Wipat A."/>
            <person name="Yamamoto H."/>
            <person name="Yamane K."/>
            <person name="Yasumoto K."/>
            <person name="Yata K."/>
            <person name="Yoshida K."/>
            <person name="Yoshikawa H.-F."/>
            <person name="Zumstein E."/>
            <person name="Yoshikawa H."/>
            <person name="Danchin A."/>
        </authorList>
    </citation>
    <scope>NUCLEOTIDE SEQUENCE [LARGE SCALE GENOMIC DNA]</scope>
    <source>
        <strain>168</strain>
    </source>
</reference>
<reference key="3">
    <citation type="journal article" date="2009" name="Microbiology">
        <title>From a consortium sequence to a unified sequence: the Bacillus subtilis 168 reference genome a decade later.</title>
        <authorList>
            <person name="Barbe V."/>
            <person name="Cruveiller S."/>
            <person name="Kunst F."/>
            <person name="Lenoble P."/>
            <person name="Meurice G."/>
            <person name="Sekowska A."/>
            <person name="Vallenet D."/>
            <person name="Wang T."/>
            <person name="Moszer I."/>
            <person name="Medigue C."/>
            <person name="Danchin A."/>
        </authorList>
    </citation>
    <scope>SEQUENCE REVISION TO 239</scope>
</reference>
<reference key="4">
    <citation type="journal article" date="2007" name="Mol. Cell. Proteomics">
        <title>The serine/threonine/tyrosine phosphoproteome of the model bacterium Bacillus subtilis.</title>
        <authorList>
            <person name="Macek B."/>
            <person name="Mijakovic I."/>
            <person name="Olsen J.V."/>
            <person name="Gnad F."/>
            <person name="Kumar C."/>
            <person name="Jensen P.R."/>
            <person name="Mann M."/>
        </authorList>
    </citation>
    <scope>PHOSPHORYLATION [LARGE SCALE ANALYSIS] AT SER-271</scope>
    <scope>IDENTIFICATION BY MASS SPECTROMETRY</scope>
    <source>
        <strain>168</strain>
    </source>
</reference>
<sequence length="398" mass="43436">MLDQNVITETKAEHLLHEYQPGAFFLASPHRVLLAKGICEIVPEADGQNQMETLSGRIAEALRQAKQSGQSRPLVVGAVPFDQVKAARLVVPEEVRWSGPLQFDHEEKEQQAGHTYHIKPVPEPEDYKNGVEQGLARIADGTLSKIVLSRSLHLTSPEPIQTDELLRHLAQHNSHGYTFAADVSSQEETSPRRTLLGASPELLVSRMGTQVVSNPLAGSRPRSNDPVEDQRRAAELLSSAKDLHEHAVVADAVAAALRPFCRTLEVPEKPSLIKTETMWHLSSVIKGELSDPSVTALELAAALHPTPAVCGTPTDLAREAILSIEPFDRGFFTGMVGWCDDAGDGEWIVTIRCAEAEERSLRLYAGAGVVAGSKPEDELQETSAKFRTMLRAMGVDHI</sequence>
<gene>
    <name type="primary">dhbC</name>
    <name type="ordered locus">BSU31990</name>
</gene>
<name>DHBC_BACSU</name>
<accession>P45744</accession>
<evidence type="ECO:0000269" key="1">
    <source>
    </source>
</evidence>
<evidence type="ECO:0000305" key="2"/>
<keyword id="KW-0413">Isomerase</keyword>
<keyword id="KW-0597">Phosphoprotein</keyword>
<keyword id="KW-1185">Reference proteome</keyword>
<protein>
    <recommendedName>
        <fullName>Isochorismate synthase DhbC</fullName>
        <ecNumber>5.4.4.2</ecNumber>
    </recommendedName>
    <alternativeName>
        <fullName>Isochorismate mutase</fullName>
    </alternativeName>
</protein>
<comment type="catalytic activity">
    <reaction>
        <text>chorismate = isochorismate</text>
        <dbReference type="Rhea" id="RHEA:18985"/>
        <dbReference type="ChEBI" id="CHEBI:29748"/>
        <dbReference type="ChEBI" id="CHEBI:29780"/>
        <dbReference type="EC" id="5.4.4.2"/>
    </reaction>
</comment>
<comment type="pathway">
    <text>Siderophore biosynthesis; bacillibactin biosynthesis.</text>
</comment>
<comment type="similarity">
    <text evidence="2">Belongs to the isochorismate synthase family.</text>
</comment>
<feature type="chain" id="PRO_0000154146" description="Isochorismate synthase DhbC">
    <location>
        <begin position="1"/>
        <end position="398"/>
    </location>
</feature>
<feature type="modified residue" description="Phosphoserine" evidence="1">
    <location>
        <position position="271"/>
    </location>
</feature>
<feature type="sequence conflict" description="In Ref. 1; AAC44631." evidence="2" ref="1">
    <original>S</original>
    <variation>P</variation>
    <location>
        <position position="239"/>
    </location>
</feature>